<accession>A8FJD5</accession>
<gene>
    <name evidence="1" type="primary">ppaC</name>
    <name type="ordered locus">BPUM_3708</name>
</gene>
<evidence type="ECO:0000255" key="1">
    <source>
        <dbReference type="HAMAP-Rule" id="MF_00207"/>
    </source>
</evidence>
<protein>
    <recommendedName>
        <fullName evidence="1">Probable manganese-dependent inorganic pyrophosphatase</fullName>
        <ecNumber evidence="1">3.6.1.1</ecNumber>
    </recommendedName>
    <alternativeName>
        <fullName evidence="1">Pyrophosphate phospho-hydrolase</fullName>
        <shortName evidence="1">PPase</shortName>
    </alternativeName>
</protein>
<proteinExistence type="inferred from homology"/>
<sequence length="308" mass="33551">MGKTLVFGHKNPDTDTICSAIAYADLKNKIGVEAEAVRLGEINGETQFALDFFKQEAPRFIETAANETKQVILVDHNEFQQSVSDIDQVQVTEVIDHHRIANFETSEPLYYRAEPVGCTATILNKMYKENQVKIEKEIAGLLLSAIISDSLLFKSPTCTQQDIDAAHELAEIAGVDPEVYGLDMLKAGADLSQKTVQELITIDAKEFALGNSKVEIAQVNTVDIAEVTARQTDIEAKINEVIAAKGLDLFVLVITDILENDSLALALGAEAAKVEKAFHVTLENNTALLKGVVSRKKQVVPALTDALS</sequence>
<feature type="chain" id="PRO_1000058581" description="Probable manganese-dependent inorganic pyrophosphatase">
    <location>
        <begin position="1"/>
        <end position="308"/>
    </location>
</feature>
<feature type="binding site" evidence="1">
    <location>
        <position position="9"/>
    </location>
    <ligand>
        <name>Mn(2+)</name>
        <dbReference type="ChEBI" id="CHEBI:29035"/>
        <label>1</label>
    </ligand>
</feature>
<feature type="binding site" evidence="1">
    <location>
        <position position="13"/>
    </location>
    <ligand>
        <name>Mn(2+)</name>
        <dbReference type="ChEBI" id="CHEBI:29035"/>
        <label>1</label>
    </ligand>
</feature>
<feature type="binding site" evidence="1">
    <location>
        <position position="15"/>
    </location>
    <ligand>
        <name>Mn(2+)</name>
        <dbReference type="ChEBI" id="CHEBI:29035"/>
        <label>2</label>
    </ligand>
</feature>
<feature type="binding site" evidence="1">
    <location>
        <position position="75"/>
    </location>
    <ligand>
        <name>Mn(2+)</name>
        <dbReference type="ChEBI" id="CHEBI:29035"/>
        <label>1</label>
    </ligand>
</feature>
<feature type="binding site" evidence="1">
    <location>
        <position position="75"/>
    </location>
    <ligand>
        <name>Mn(2+)</name>
        <dbReference type="ChEBI" id="CHEBI:29035"/>
        <label>2</label>
    </ligand>
</feature>
<feature type="binding site" evidence="1">
    <location>
        <position position="97"/>
    </location>
    <ligand>
        <name>Mn(2+)</name>
        <dbReference type="ChEBI" id="CHEBI:29035"/>
        <label>2</label>
    </ligand>
</feature>
<feature type="binding site" evidence="1">
    <location>
        <position position="149"/>
    </location>
    <ligand>
        <name>Mn(2+)</name>
        <dbReference type="ChEBI" id="CHEBI:29035"/>
        <label>2</label>
    </ligand>
</feature>
<name>PPAC_BACP2</name>
<organism>
    <name type="scientific">Bacillus pumilus (strain SAFR-032)</name>
    <dbReference type="NCBI Taxonomy" id="315750"/>
    <lineage>
        <taxon>Bacteria</taxon>
        <taxon>Bacillati</taxon>
        <taxon>Bacillota</taxon>
        <taxon>Bacilli</taxon>
        <taxon>Bacillales</taxon>
        <taxon>Bacillaceae</taxon>
        <taxon>Bacillus</taxon>
    </lineage>
</organism>
<keyword id="KW-0963">Cytoplasm</keyword>
<keyword id="KW-0378">Hydrolase</keyword>
<keyword id="KW-0464">Manganese</keyword>
<keyword id="KW-0479">Metal-binding</keyword>
<comment type="catalytic activity">
    <reaction evidence="1">
        <text>diphosphate + H2O = 2 phosphate + H(+)</text>
        <dbReference type="Rhea" id="RHEA:24576"/>
        <dbReference type="ChEBI" id="CHEBI:15377"/>
        <dbReference type="ChEBI" id="CHEBI:15378"/>
        <dbReference type="ChEBI" id="CHEBI:33019"/>
        <dbReference type="ChEBI" id="CHEBI:43474"/>
        <dbReference type="EC" id="3.6.1.1"/>
    </reaction>
</comment>
<comment type="cofactor">
    <cofactor evidence="1">
        <name>Mn(2+)</name>
        <dbReference type="ChEBI" id="CHEBI:29035"/>
    </cofactor>
    <text evidence="1">Binds 2 manganese ions per subunit.</text>
</comment>
<comment type="subcellular location">
    <subcellularLocation>
        <location evidence="1">Cytoplasm</location>
    </subcellularLocation>
</comment>
<comment type="similarity">
    <text evidence="1">Belongs to the PPase class C family.</text>
</comment>
<reference key="1">
    <citation type="journal article" date="2007" name="PLoS ONE">
        <title>Paradoxical DNA repair and peroxide resistance gene conservation in Bacillus pumilus SAFR-032.</title>
        <authorList>
            <person name="Gioia J."/>
            <person name="Yerrapragada S."/>
            <person name="Qin X."/>
            <person name="Jiang H."/>
            <person name="Igboeli O.C."/>
            <person name="Muzny D."/>
            <person name="Dugan-Rocha S."/>
            <person name="Ding Y."/>
            <person name="Hawes A."/>
            <person name="Liu W."/>
            <person name="Perez L."/>
            <person name="Kovar C."/>
            <person name="Dinh H."/>
            <person name="Lee S."/>
            <person name="Nazareth L."/>
            <person name="Blyth P."/>
            <person name="Holder M."/>
            <person name="Buhay C."/>
            <person name="Tirumalai M.R."/>
            <person name="Liu Y."/>
            <person name="Dasgupta I."/>
            <person name="Bokhetache L."/>
            <person name="Fujita M."/>
            <person name="Karouia F."/>
            <person name="Eswara Moorthy P."/>
            <person name="Siefert J."/>
            <person name="Uzman A."/>
            <person name="Buzumbo P."/>
            <person name="Verma A."/>
            <person name="Zwiya H."/>
            <person name="McWilliams B.D."/>
            <person name="Olowu A."/>
            <person name="Clinkenbeard K.D."/>
            <person name="Newcombe D."/>
            <person name="Golebiewski L."/>
            <person name="Petrosino J.F."/>
            <person name="Nicholson W.L."/>
            <person name="Fox G.E."/>
            <person name="Venkateswaran K."/>
            <person name="Highlander S.K."/>
            <person name="Weinstock G.M."/>
        </authorList>
    </citation>
    <scope>NUCLEOTIDE SEQUENCE [LARGE SCALE GENOMIC DNA]</scope>
    <source>
        <strain>SAFR-032</strain>
    </source>
</reference>
<dbReference type="EC" id="3.6.1.1" evidence="1"/>
<dbReference type="EMBL" id="CP000813">
    <property type="protein sequence ID" value="ABV64352.1"/>
    <property type="molecule type" value="Genomic_DNA"/>
</dbReference>
<dbReference type="RefSeq" id="WP_012011899.1">
    <property type="nucleotide sequence ID" value="NC_009848.4"/>
</dbReference>
<dbReference type="SMR" id="A8FJD5"/>
<dbReference type="STRING" id="315750.BPUM_3708"/>
<dbReference type="GeneID" id="5623000"/>
<dbReference type="KEGG" id="bpu:BPUM_3708"/>
<dbReference type="eggNOG" id="COG1227">
    <property type="taxonomic scope" value="Bacteria"/>
</dbReference>
<dbReference type="HOGENOM" id="CLU_025243_0_1_9"/>
<dbReference type="OrthoDB" id="9766150at2"/>
<dbReference type="Proteomes" id="UP000001355">
    <property type="component" value="Chromosome"/>
</dbReference>
<dbReference type="GO" id="GO:0005737">
    <property type="term" value="C:cytoplasm"/>
    <property type="evidence" value="ECO:0007669"/>
    <property type="project" value="UniProtKB-SubCell"/>
</dbReference>
<dbReference type="GO" id="GO:0004427">
    <property type="term" value="F:inorganic diphosphate phosphatase activity"/>
    <property type="evidence" value="ECO:0007669"/>
    <property type="project" value="UniProtKB-UniRule"/>
</dbReference>
<dbReference type="GO" id="GO:0030145">
    <property type="term" value="F:manganese ion binding"/>
    <property type="evidence" value="ECO:0007669"/>
    <property type="project" value="UniProtKB-UniRule"/>
</dbReference>
<dbReference type="FunFam" id="3.10.310.20:FF:000001">
    <property type="entry name" value="Probable manganese-dependent inorganic pyrophosphatase"/>
    <property type="match status" value="1"/>
</dbReference>
<dbReference type="FunFam" id="3.90.1640.10:FF:000001">
    <property type="entry name" value="Probable manganese-dependent inorganic pyrophosphatase"/>
    <property type="match status" value="1"/>
</dbReference>
<dbReference type="Gene3D" id="3.10.310.20">
    <property type="entry name" value="DHHA2 domain"/>
    <property type="match status" value="1"/>
</dbReference>
<dbReference type="Gene3D" id="3.90.1640.10">
    <property type="entry name" value="inorganic pyrophosphatase (n-terminal core)"/>
    <property type="match status" value="1"/>
</dbReference>
<dbReference type="HAMAP" id="MF_00207">
    <property type="entry name" value="PPase_C"/>
    <property type="match status" value="1"/>
</dbReference>
<dbReference type="InterPro" id="IPR001667">
    <property type="entry name" value="DDH_dom"/>
</dbReference>
<dbReference type="InterPro" id="IPR038763">
    <property type="entry name" value="DHH_sf"/>
</dbReference>
<dbReference type="InterPro" id="IPR004097">
    <property type="entry name" value="DHHA2"/>
</dbReference>
<dbReference type="InterPro" id="IPR038222">
    <property type="entry name" value="DHHA2_dom_sf"/>
</dbReference>
<dbReference type="InterPro" id="IPR022934">
    <property type="entry name" value="Mn-dep_inorganic_PyrPase"/>
</dbReference>
<dbReference type="NCBIfam" id="NF003877">
    <property type="entry name" value="PRK05427.1"/>
    <property type="match status" value="1"/>
</dbReference>
<dbReference type="PANTHER" id="PTHR12112">
    <property type="entry name" value="BNIP - RELATED"/>
    <property type="match status" value="1"/>
</dbReference>
<dbReference type="PANTHER" id="PTHR12112:SF22">
    <property type="entry name" value="MANGANESE-DEPENDENT INORGANIC PYROPHOSPHATASE-RELATED"/>
    <property type="match status" value="1"/>
</dbReference>
<dbReference type="Pfam" id="PF01368">
    <property type="entry name" value="DHH"/>
    <property type="match status" value="1"/>
</dbReference>
<dbReference type="Pfam" id="PF02833">
    <property type="entry name" value="DHHA2"/>
    <property type="match status" value="1"/>
</dbReference>
<dbReference type="SMART" id="SM01131">
    <property type="entry name" value="DHHA2"/>
    <property type="match status" value="1"/>
</dbReference>
<dbReference type="SUPFAM" id="SSF64182">
    <property type="entry name" value="DHH phosphoesterases"/>
    <property type="match status" value="1"/>
</dbReference>